<gene>
    <name type="primary">SLC14A2</name>
    <name type="synonym">HUT2</name>
    <name type="synonym">UT2</name>
</gene>
<feature type="chain" id="PRO_0000065739" description="Urea transporter 2">
    <location>
        <begin position="1"/>
        <end position="920"/>
    </location>
</feature>
<feature type="transmembrane region" description="Helical" evidence="2">
    <location>
        <begin position="151"/>
        <end position="170"/>
    </location>
</feature>
<feature type="transmembrane region" description="Helical" evidence="2">
    <location>
        <begin position="176"/>
        <end position="196"/>
    </location>
</feature>
<feature type="transmembrane region" description="Helical" evidence="2">
    <location>
        <begin position="204"/>
        <end position="224"/>
    </location>
</feature>
<feature type="transmembrane region" description="Helical" evidence="2">
    <location>
        <begin position="233"/>
        <end position="253"/>
    </location>
</feature>
<feature type="transmembrane region" description="Helical" evidence="2">
    <location>
        <begin position="272"/>
        <end position="291"/>
    </location>
</feature>
<feature type="transmembrane region" description="Helical" evidence="2">
    <location>
        <begin position="302"/>
        <end position="322"/>
    </location>
</feature>
<feature type="transmembrane region" description="Helical" evidence="2">
    <location>
        <begin position="346"/>
        <end position="366"/>
    </location>
</feature>
<feature type="transmembrane region" description="Helical" evidence="2">
    <location>
        <begin position="370"/>
        <end position="390"/>
    </location>
</feature>
<feature type="transmembrane region" description="Helical" evidence="2">
    <location>
        <begin position="392"/>
        <end position="412"/>
    </location>
</feature>
<feature type="transmembrane region" description="Helical" evidence="2">
    <location>
        <begin position="600"/>
        <end position="620"/>
    </location>
</feature>
<feature type="transmembrane region" description="Helical" evidence="2">
    <location>
        <begin position="638"/>
        <end position="658"/>
    </location>
</feature>
<feature type="transmembrane region" description="Helical" evidence="2">
    <location>
        <begin position="666"/>
        <end position="686"/>
    </location>
</feature>
<feature type="transmembrane region" description="Helical" evidence="2">
    <location>
        <begin position="695"/>
        <end position="715"/>
    </location>
</feature>
<feature type="transmembrane region" description="Helical" evidence="2">
    <location>
        <begin position="764"/>
        <end position="784"/>
    </location>
</feature>
<feature type="transmembrane region" description="Helical" evidence="2">
    <location>
        <begin position="803"/>
        <end position="823"/>
    </location>
</feature>
<feature type="transmembrane region" description="Helical" evidence="2">
    <location>
        <begin position="832"/>
        <end position="852"/>
    </location>
</feature>
<feature type="transmembrane region" description="Helical" evidence="2">
    <location>
        <begin position="854"/>
        <end position="874"/>
    </location>
</feature>
<feature type="region of interest" description="Disordered" evidence="3">
    <location>
        <begin position="25"/>
        <end position="57"/>
    </location>
</feature>
<feature type="region of interest" description="Disordered" evidence="3">
    <location>
        <begin position="446"/>
        <end position="467"/>
    </location>
</feature>
<feature type="compositionally biased region" description="Low complexity" evidence="3">
    <location>
        <begin position="26"/>
        <end position="39"/>
    </location>
</feature>
<feature type="compositionally biased region" description="Basic and acidic residues" evidence="3">
    <location>
        <begin position="47"/>
        <end position="57"/>
    </location>
</feature>
<feature type="modified residue" description="Phosphoserine" evidence="1">
    <location>
        <position position="477"/>
    </location>
</feature>
<feature type="glycosylation site" description="N-linked (GlcNAc...) asparagine" evidence="2">
    <location>
        <position position="733"/>
    </location>
</feature>
<feature type="splice variant" id="VSP_031171" description="In isoform 2." evidence="10">
    <location>
        <begin position="1"/>
        <end position="523"/>
    </location>
</feature>
<feature type="sequence variant" id="VAR_057016" description="In dbSNP:rs34461862.">
    <original>T</original>
    <variation>I</variation>
    <location>
        <position position="37"/>
    </location>
</feature>
<feature type="sequence variant" id="VAR_060255" description="In dbSNP:rs1484873." evidence="4 5 6">
    <original>I</original>
    <variation>V</variation>
    <location>
        <position position="132"/>
    </location>
</feature>
<feature type="sequence variant" id="VAR_057017" description="In dbSNP:rs35245152.">
    <original>G</original>
    <variation>S</variation>
    <location>
        <position position="443"/>
    </location>
</feature>
<feature type="sequence variant" id="VAR_060256" description="In dbSNP:rs9960464." evidence="4 5 6">
    <original>R</original>
    <variation>Q</variation>
    <location>
        <position position="510"/>
    </location>
</feature>
<feature type="sequence variant" id="VAR_057018" description="In dbSNP:rs1123617.">
    <original>V</original>
    <variation>I</variation>
    <location>
        <position position="750"/>
    </location>
</feature>
<feature type="sequence variant" id="VAR_038690" description="In dbSNP:rs3745009." evidence="6">
    <original>A</original>
    <variation>T</variation>
    <location>
        <position position="880"/>
    </location>
</feature>
<feature type="sequence conflict" description="In Ref. 2; AAL08485." evidence="11" ref="2">
    <original>V</original>
    <variation>A</variation>
    <location>
        <position position="195"/>
    </location>
</feature>
<feature type="sequence conflict" description="In Ref. 3; BAF85111." evidence="11" ref="3">
    <original>T</original>
    <variation>I</variation>
    <location>
        <position position="515"/>
    </location>
</feature>
<feature type="sequence conflict" description="In Ref. 2; AAL08485." evidence="11" ref="2">
    <original>T</original>
    <variation>A</variation>
    <location>
        <position position="723"/>
    </location>
</feature>
<feature type="sequence conflict" description="In Ref. 3; BAF85111." evidence="11" ref="3">
    <original>N</original>
    <variation>D</variation>
    <location>
        <position position="905"/>
    </location>
</feature>
<feature type="helix" evidence="12">
    <location>
        <begin position="94"/>
        <end position="97"/>
    </location>
</feature>
<feature type="helix" evidence="15">
    <location>
        <begin position="103"/>
        <end position="109"/>
    </location>
</feature>
<feature type="helix" evidence="15">
    <location>
        <begin position="114"/>
        <end position="127"/>
    </location>
</feature>
<feature type="helix" evidence="15">
    <location>
        <begin position="128"/>
        <end position="130"/>
    </location>
</feature>
<feature type="helix" evidence="15">
    <location>
        <begin position="135"/>
        <end position="148"/>
    </location>
</feature>
<feature type="helix" evidence="15">
    <location>
        <begin position="150"/>
        <end position="169"/>
    </location>
</feature>
<feature type="helix" evidence="15">
    <location>
        <begin position="174"/>
        <end position="178"/>
    </location>
</feature>
<feature type="turn" evidence="15">
    <location>
        <begin position="179"/>
        <end position="183"/>
    </location>
</feature>
<feature type="helix" evidence="15">
    <location>
        <begin position="184"/>
        <end position="195"/>
    </location>
</feature>
<feature type="strand" evidence="15">
    <location>
        <begin position="197"/>
        <end position="199"/>
    </location>
</feature>
<feature type="helix" evidence="15">
    <location>
        <begin position="204"/>
        <end position="206"/>
    </location>
</feature>
<feature type="helix" evidence="15">
    <location>
        <begin position="207"/>
        <end position="228"/>
    </location>
</feature>
<feature type="helix" evidence="15">
    <location>
        <begin position="229"/>
        <end position="231"/>
    </location>
</feature>
<feature type="helix" evidence="15">
    <location>
        <begin position="238"/>
        <end position="251"/>
    </location>
</feature>
<feature type="strand" evidence="15">
    <location>
        <begin position="256"/>
        <end position="258"/>
    </location>
</feature>
<feature type="strand" evidence="12">
    <location>
        <begin position="274"/>
        <end position="276"/>
    </location>
</feature>
<feature type="helix" evidence="15">
    <location>
        <begin position="279"/>
        <end position="291"/>
    </location>
</feature>
<feature type="helix" evidence="15">
    <location>
        <begin position="292"/>
        <end position="294"/>
    </location>
</feature>
<feature type="helix" evidence="15">
    <location>
        <begin position="299"/>
        <end position="312"/>
    </location>
</feature>
<feature type="helix" evidence="15">
    <location>
        <begin position="314"/>
        <end position="333"/>
    </location>
</feature>
<feature type="helix" evidence="15">
    <location>
        <begin position="338"/>
        <end position="342"/>
    </location>
</feature>
<feature type="turn" evidence="15">
    <location>
        <begin position="343"/>
        <end position="347"/>
    </location>
</feature>
<feature type="helix" evidence="15">
    <location>
        <begin position="348"/>
        <end position="357"/>
    </location>
</feature>
<feature type="turn" evidence="15">
    <location>
        <begin position="358"/>
        <end position="360"/>
    </location>
</feature>
<feature type="helix" evidence="15">
    <location>
        <begin position="366"/>
        <end position="391"/>
    </location>
</feature>
<feature type="turn" evidence="15">
    <location>
        <begin position="392"/>
        <end position="394"/>
    </location>
</feature>
<feature type="helix" evidence="15">
    <location>
        <begin position="400"/>
        <end position="411"/>
    </location>
</feature>
<feature type="helix" evidence="15">
    <location>
        <begin position="424"/>
        <end position="426"/>
    </location>
</feature>
<feature type="helix" evidence="15">
    <location>
        <begin position="430"/>
        <end position="439"/>
    </location>
</feature>
<feature type="helix" evidence="13">
    <location>
        <begin position="576"/>
        <end position="589"/>
    </location>
</feature>
<feature type="helix" evidence="13">
    <location>
        <begin position="590"/>
        <end position="592"/>
    </location>
</feature>
<feature type="helix" evidence="13">
    <location>
        <begin position="597"/>
        <end position="610"/>
    </location>
</feature>
<feature type="helix" evidence="13">
    <location>
        <begin position="612"/>
        <end position="631"/>
    </location>
</feature>
<feature type="helix" evidence="13">
    <location>
        <begin position="637"/>
        <end position="640"/>
    </location>
</feature>
<feature type="turn" evidence="13">
    <location>
        <begin position="643"/>
        <end position="645"/>
    </location>
</feature>
<feature type="helix" evidence="13">
    <location>
        <begin position="646"/>
        <end position="657"/>
    </location>
</feature>
<feature type="helix" evidence="13">
    <location>
        <begin position="666"/>
        <end position="668"/>
    </location>
</feature>
<feature type="helix" evidence="13">
    <location>
        <begin position="669"/>
        <end position="676"/>
    </location>
</feature>
<feature type="helix" evidence="13">
    <location>
        <begin position="678"/>
        <end position="689"/>
    </location>
</feature>
<feature type="helix" evidence="13">
    <location>
        <begin position="690"/>
        <end position="692"/>
    </location>
</feature>
<feature type="helix" evidence="13">
    <location>
        <begin position="700"/>
        <end position="713"/>
    </location>
</feature>
<feature type="strand" evidence="13">
    <location>
        <begin position="718"/>
        <end position="720"/>
    </location>
</feature>
<feature type="helix" evidence="13">
    <location>
        <begin position="736"/>
        <end position="738"/>
    </location>
</feature>
<feature type="helix" evidence="13">
    <location>
        <begin position="741"/>
        <end position="745"/>
    </location>
</feature>
<feature type="helix" evidence="13">
    <location>
        <begin position="747"/>
        <end position="753"/>
    </location>
</feature>
<feature type="turn" evidence="13">
    <location>
        <begin position="754"/>
        <end position="757"/>
    </location>
</feature>
<feature type="helix" evidence="13">
    <location>
        <begin position="761"/>
        <end position="774"/>
    </location>
</feature>
<feature type="helix" evidence="13">
    <location>
        <begin position="776"/>
        <end position="793"/>
    </location>
</feature>
<feature type="turn" evidence="13">
    <location>
        <begin position="794"/>
        <end position="797"/>
    </location>
</feature>
<feature type="helix" evidence="13">
    <location>
        <begin position="800"/>
        <end position="803"/>
    </location>
</feature>
<feature type="turn" evidence="13">
    <location>
        <begin position="804"/>
        <end position="808"/>
    </location>
</feature>
<feature type="helix" evidence="13">
    <location>
        <begin position="810"/>
        <end position="820"/>
    </location>
</feature>
<feature type="turn" evidence="14">
    <location>
        <begin position="821"/>
        <end position="823"/>
    </location>
</feature>
<feature type="helix" evidence="13">
    <location>
        <begin position="828"/>
        <end position="851"/>
    </location>
</feature>
<feature type="turn" evidence="13">
    <location>
        <begin position="852"/>
        <end position="856"/>
    </location>
</feature>
<feature type="helix" evidence="13">
    <location>
        <begin position="862"/>
        <end position="872"/>
    </location>
</feature>
<feature type="helix" evidence="13">
    <location>
        <begin position="886"/>
        <end position="888"/>
    </location>
</feature>
<feature type="helix" evidence="13">
    <location>
        <begin position="892"/>
        <end position="903"/>
    </location>
</feature>
<dbReference type="EMBL" id="X96969">
    <property type="protein sequence ID" value="CAA65657.1"/>
    <property type="molecule type" value="mRNA"/>
</dbReference>
<dbReference type="EMBL" id="AF349446">
    <property type="protein sequence ID" value="AAL08485.1"/>
    <property type="molecule type" value="mRNA"/>
</dbReference>
<dbReference type="EMBL" id="AK292422">
    <property type="protein sequence ID" value="BAF85111.1"/>
    <property type="molecule type" value="mRNA"/>
</dbReference>
<dbReference type="EMBL" id="AC023421">
    <property type="status" value="NOT_ANNOTATED_CDS"/>
    <property type="molecule type" value="Genomic_DNA"/>
</dbReference>
<dbReference type="EMBL" id="BC110446">
    <property type="protein sequence ID" value="AAI10447.1"/>
    <property type="molecule type" value="mRNA"/>
</dbReference>
<dbReference type="CCDS" id="CCDS11924.1">
    <molecule id="Q15849-1"/>
</dbReference>
<dbReference type="PIR" id="S71339">
    <property type="entry name" value="S71339"/>
</dbReference>
<dbReference type="RefSeq" id="NP_001229621.1">
    <molecule id="Q15849-1"/>
    <property type="nucleotide sequence ID" value="NM_001242692.2"/>
</dbReference>
<dbReference type="RefSeq" id="NP_001358248.1">
    <molecule id="Q15849-1"/>
    <property type="nucleotide sequence ID" value="NM_001371319.1"/>
</dbReference>
<dbReference type="RefSeq" id="NP_009094.3">
    <molecule id="Q15849-1"/>
    <property type="nucleotide sequence ID" value="NM_007163.3"/>
</dbReference>
<dbReference type="RefSeq" id="XP_016881504.1">
    <property type="nucleotide sequence ID" value="XM_017026015.1"/>
</dbReference>
<dbReference type="RefSeq" id="XP_024307038.1">
    <molecule id="Q15849-1"/>
    <property type="nucleotide sequence ID" value="XM_024451270.2"/>
</dbReference>
<dbReference type="RefSeq" id="XP_047293831.1">
    <molecule id="Q15849-1"/>
    <property type="nucleotide sequence ID" value="XM_047437875.1"/>
</dbReference>
<dbReference type="PDB" id="8BLO">
    <property type="method" value="EM"/>
    <property type="resolution" value="2.90 A"/>
    <property type="chains" value="A/B/C=1-903"/>
</dbReference>
<dbReference type="PDB" id="8XD7">
    <property type="method" value="EM"/>
    <property type="resolution" value="2.60 A"/>
    <property type="chains" value="A/B/C=524-920"/>
</dbReference>
<dbReference type="PDB" id="8XD9">
    <property type="method" value="EM"/>
    <property type="resolution" value="2.80 A"/>
    <property type="chains" value="A/B/C=524-920"/>
</dbReference>
<dbReference type="PDB" id="8XDA">
    <property type="method" value="EM"/>
    <property type="resolution" value="3.00 A"/>
    <property type="chains" value="A/B/C=524-920"/>
</dbReference>
<dbReference type="PDB" id="8XDB">
    <property type="method" value="EM"/>
    <property type="resolution" value="3.30 A"/>
    <property type="chains" value="A/B/C=524-920"/>
</dbReference>
<dbReference type="PDB" id="8XDC">
    <property type="method" value="EM"/>
    <property type="resolution" value="3.00 A"/>
    <property type="chains" value="A/B/C=524-920"/>
</dbReference>
<dbReference type="PDB" id="8XDD">
    <property type="method" value="EM"/>
    <property type="resolution" value="3.00 A"/>
    <property type="chains" value="A/B/C=524-920"/>
</dbReference>
<dbReference type="PDB" id="8XDE">
    <property type="method" value="EM"/>
    <property type="resolution" value="2.30 A"/>
    <property type="chains" value="A/B/C=1-451"/>
</dbReference>
<dbReference type="PDBsum" id="8BLO"/>
<dbReference type="PDBsum" id="8XD7"/>
<dbReference type="PDBsum" id="8XD9"/>
<dbReference type="PDBsum" id="8XDA"/>
<dbReference type="PDBsum" id="8XDB"/>
<dbReference type="PDBsum" id="8XDC"/>
<dbReference type="PDBsum" id="8XDD"/>
<dbReference type="PDBsum" id="8XDE"/>
<dbReference type="EMDB" id="EMD-16110"/>
<dbReference type="EMDB" id="EMD-16111"/>
<dbReference type="EMDB" id="EMD-38268"/>
<dbReference type="EMDB" id="EMD-38270"/>
<dbReference type="EMDB" id="EMD-38271"/>
<dbReference type="EMDB" id="EMD-38272"/>
<dbReference type="EMDB" id="EMD-38273"/>
<dbReference type="EMDB" id="EMD-38274"/>
<dbReference type="EMDB" id="EMD-38275"/>
<dbReference type="SMR" id="Q15849"/>
<dbReference type="BioGRID" id="113822">
    <property type="interactions" value="18"/>
</dbReference>
<dbReference type="FunCoup" id="Q15849">
    <property type="interactions" value="215"/>
</dbReference>
<dbReference type="IntAct" id="Q15849">
    <property type="interactions" value="16"/>
</dbReference>
<dbReference type="STRING" id="9606.ENSP00000255226"/>
<dbReference type="DrugBank" id="DB01005">
    <property type="generic name" value="Hydroxyurea"/>
</dbReference>
<dbReference type="DrugBank" id="DB03904">
    <property type="generic name" value="Urea"/>
</dbReference>
<dbReference type="TCDB" id="1.A.28.1.6">
    <property type="family name" value="the urea transporter (ut) family"/>
</dbReference>
<dbReference type="GlyCosmos" id="Q15849">
    <property type="glycosylation" value="1 site, No reported glycans"/>
</dbReference>
<dbReference type="GlyGen" id="Q15849">
    <property type="glycosylation" value="1 site"/>
</dbReference>
<dbReference type="iPTMnet" id="Q15849"/>
<dbReference type="PhosphoSitePlus" id="Q15849"/>
<dbReference type="BioMuta" id="SLC14A2"/>
<dbReference type="DMDM" id="292495053"/>
<dbReference type="jPOST" id="Q15849"/>
<dbReference type="MassIVE" id="Q15849"/>
<dbReference type="PaxDb" id="9606-ENSP00000255226"/>
<dbReference type="PeptideAtlas" id="Q15849"/>
<dbReference type="ProteomicsDB" id="60792">
    <molecule id="Q15849-1"/>
</dbReference>
<dbReference type="ProteomicsDB" id="60793">
    <molecule id="Q15849-2"/>
</dbReference>
<dbReference type="Antibodypedia" id="22411">
    <property type="antibodies" value="67 antibodies from 17 providers"/>
</dbReference>
<dbReference type="DNASU" id="8170"/>
<dbReference type="Ensembl" id="ENST00000255226.11">
    <molecule id="Q15849-1"/>
    <property type="protein sequence ID" value="ENSP00000255226.5"/>
    <property type="gene ID" value="ENSG00000132874.15"/>
</dbReference>
<dbReference type="Ensembl" id="ENST00000586448.5">
    <molecule id="Q15849-1"/>
    <property type="protein sequence ID" value="ENSP00000465953.1"/>
    <property type="gene ID" value="ENSG00000132874.15"/>
</dbReference>
<dbReference type="GeneID" id="8170"/>
<dbReference type="KEGG" id="hsa:8170"/>
<dbReference type="MANE-Select" id="ENST00000255226.11">
    <property type="protein sequence ID" value="ENSP00000255226.5"/>
    <property type="RefSeq nucleotide sequence ID" value="NM_007163.4"/>
    <property type="RefSeq protein sequence ID" value="NP_009094.3"/>
</dbReference>
<dbReference type="UCSC" id="uc002lbe.4">
    <molecule id="Q15849-1"/>
    <property type="organism name" value="human"/>
</dbReference>
<dbReference type="AGR" id="HGNC:10919"/>
<dbReference type="CTD" id="8170"/>
<dbReference type="DisGeNET" id="8170"/>
<dbReference type="GeneCards" id="SLC14A2"/>
<dbReference type="HGNC" id="HGNC:10919">
    <property type="gene designation" value="SLC14A2"/>
</dbReference>
<dbReference type="HPA" id="ENSG00000132874">
    <property type="expression patterns" value="Tissue enhanced (adipose tissue, kidney)"/>
</dbReference>
<dbReference type="MIM" id="601611">
    <property type="type" value="gene"/>
</dbReference>
<dbReference type="neXtProt" id="NX_Q15849"/>
<dbReference type="OpenTargets" id="ENSG00000132874"/>
<dbReference type="PharmGKB" id="PA35811"/>
<dbReference type="VEuPathDB" id="HostDB:ENSG00000132874"/>
<dbReference type="eggNOG" id="ENOG502QWSG">
    <property type="taxonomic scope" value="Eukaryota"/>
</dbReference>
<dbReference type="GeneTree" id="ENSGT00390000018729"/>
<dbReference type="HOGENOM" id="CLU_340555_0_0_1"/>
<dbReference type="InParanoid" id="Q15849"/>
<dbReference type="OMA" id="DPFPYQY"/>
<dbReference type="OrthoDB" id="426293at2759"/>
<dbReference type="PAN-GO" id="Q15849">
    <property type="GO annotations" value="1 GO annotation based on evolutionary models"/>
</dbReference>
<dbReference type="PhylomeDB" id="Q15849"/>
<dbReference type="PathwayCommons" id="Q15849"/>
<dbReference type="Reactome" id="R-HSA-425366">
    <property type="pathway name" value="Transport of bile salts and organic acids, metal ions and amine compounds"/>
</dbReference>
<dbReference type="SignaLink" id="Q15849"/>
<dbReference type="BioGRID-ORCS" id="8170">
    <property type="hits" value="11 hits in 1142 CRISPR screens"/>
</dbReference>
<dbReference type="ChiTaRS" id="SLC14A2">
    <property type="organism name" value="human"/>
</dbReference>
<dbReference type="GeneWiki" id="SLC14A2"/>
<dbReference type="GenomeRNAi" id="8170"/>
<dbReference type="Pharos" id="Q15849">
    <property type="development level" value="Tbio"/>
</dbReference>
<dbReference type="PRO" id="PR:Q15849"/>
<dbReference type="Proteomes" id="UP000005640">
    <property type="component" value="Chromosome 18"/>
</dbReference>
<dbReference type="RNAct" id="Q15849">
    <property type="molecule type" value="protein"/>
</dbReference>
<dbReference type="Bgee" id="ENSG00000132874">
    <property type="expression patterns" value="Expressed in primordial germ cell in gonad and 66 other cell types or tissues"/>
</dbReference>
<dbReference type="ExpressionAtlas" id="Q15849">
    <property type="expression patterns" value="baseline and differential"/>
</dbReference>
<dbReference type="GO" id="GO:0016324">
    <property type="term" value="C:apical plasma membrane"/>
    <property type="evidence" value="ECO:0000314"/>
    <property type="project" value="UniProtKB"/>
</dbReference>
<dbReference type="GO" id="GO:0016020">
    <property type="term" value="C:membrane"/>
    <property type="evidence" value="ECO:0000304"/>
    <property type="project" value="ProtInc"/>
</dbReference>
<dbReference type="GO" id="GO:0005886">
    <property type="term" value="C:plasma membrane"/>
    <property type="evidence" value="ECO:0000314"/>
    <property type="project" value="UniProtKB"/>
</dbReference>
<dbReference type="GO" id="GO:0050839">
    <property type="term" value="F:cell adhesion molecule binding"/>
    <property type="evidence" value="ECO:0000314"/>
    <property type="project" value="MGI"/>
</dbReference>
<dbReference type="GO" id="GO:0015204">
    <property type="term" value="F:urea transmembrane transporter activity"/>
    <property type="evidence" value="ECO:0000314"/>
    <property type="project" value="UniProtKB"/>
</dbReference>
<dbReference type="GO" id="GO:0055085">
    <property type="term" value="P:transmembrane transport"/>
    <property type="evidence" value="ECO:0000304"/>
    <property type="project" value="Reactome"/>
</dbReference>
<dbReference type="GO" id="GO:0071918">
    <property type="term" value="P:urea transmembrane transport"/>
    <property type="evidence" value="ECO:0000318"/>
    <property type="project" value="GO_Central"/>
</dbReference>
<dbReference type="GO" id="GO:0015840">
    <property type="term" value="P:urea transport"/>
    <property type="evidence" value="ECO:0000304"/>
    <property type="project" value="ProtInc"/>
</dbReference>
<dbReference type="FunFam" id="1.10.3430.10:FF:000002">
    <property type="entry name" value="urea transporter 2"/>
    <property type="match status" value="2"/>
</dbReference>
<dbReference type="Gene3D" id="1.10.3430.10">
    <property type="entry name" value="Ammonium transporter AmtB like domains"/>
    <property type="match status" value="2"/>
</dbReference>
<dbReference type="InterPro" id="IPR029020">
    <property type="entry name" value="Ammonium/urea_transptr"/>
</dbReference>
<dbReference type="InterPro" id="IPR004937">
    <property type="entry name" value="Urea_transporter"/>
</dbReference>
<dbReference type="PANTHER" id="PTHR10464">
    <property type="entry name" value="UREA TRANSPORTER"/>
    <property type="match status" value="1"/>
</dbReference>
<dbReference type="PANTHER" id="PTHR10464:SF6">
    <property type="entry name" value="UREA TRANSPORTER 2"/>
    <property type="match status" value="1"/>
</dbReference>
<dbReference type="Pfam" id="PF03253">
    <property type="entry name" value="UT"/>
    <property type="match status" value="2"/>
</dbReference>
<protein>
    <recommendedName>
        <fullName>Urea transporter 2</fullName>
    </recommendedName>
    <alternativeName>
        <fullName>Solute carrier family 14 member 2</fullName>
    </alternativeName>
    <alternativeName>
        <fullName>Urea transporter, kidney</fullName>
    </alternativeName>
</protein>
<organism>
    <name type="scientific">Homo sapiens</name>
    <name type="common">Human</name>
    <dbReference type="NCBI Taxonomy" id="9606"/>
    <lineage>
        <taxon>Eukaryota</taxon>
        <taxon>Metazoa</taxon>
        <taxon>Chordata</taxon>
        <taxon>Craniata</taxon>
        <taxon>Vertebrata</taxon>
        <taxon>Euteleostomi</taxon>
        <taxon>Mammalia</taxon>
        <taxon>Eutheria</taxon>
        <taxon>Euarchontoglires</taxon>
        <taxon>Primates</taxon>
        <taxon>Haplorrhini</taxon>
        <taxon>Catarrhini</taxon>
        <taxon>Hominidae</taxon>
        <taxon>Homo</taxon>
    </lineage>
</organism>
<sequence>MSDPHSSPLLPEPLSSRYKLYEAEFTSPSWPSTSPDTHPALPLLEMPEEKDLRSSNEDSHIVKIEKLNERSKRKDDGVAHRDSAGQRCICLSKAVGYLTGDMKEYRIWLKDKHLALQFIDWVLRGTAQVMFINNPLSGLIIFIGLLIQNPWWTITGGLGTVVSTLTALALGQDRSAIASGLHGYNGMLVGLLMAVFSEKLDYYWWLLFPVTFTAMSCPVLSSALNSIFSKWDLPVFTLPFNIAVTLYLAATGHYNLFFPTTLVEPVSSVPNITWTEMEMPLLLQAIPVGVGQVYGCDNPWTGGVFLVALFISSPLICLHAAIGSIVGLLAALSVATPFETIYTGLWSYNCVLSCIAIGGMFYALTWQTHLLALICALFCAYMEAAISNIMSVVGVPPGTWAFCLATIIFLLLTTNNPAIFRLPLSKVTYPEANRIYYLTVKSGEEEKAPSGGGGEHPPTAGPKVEEGSEAVLSKHRSVFHIEWSSIRRRSKVFGKGEHQERQNKDPFPYRYRKPTVELLDLDTMEESSEIKVETNISKTSWIRSSMAASGKRVSKALSYITGEMKECGEGLKDKSPVFQFFDWVLRGTSQVMFVNNPLSGILIILGLFIQNPWWAISGCLGTIMSTLTALILSQDKSAIAAGFHGYNGVLVGLLMAVFSDKGDYYWWLLLPVIIMSMSCPILSSALGTIFSKWDLPVFTLPFNITVTLYLAATGHYNLFFPTTLLQPASAMPNITWSEVQVPLLLRAIPVGIGQVYGCDNPWTGGIFLIALFISSPLICLHAAIGSTMGMLAALTIATPFDSIYFGLCGFNSTLACIAIGGMFYVITWQTHLLAIACALFAAYLGAALANMLSVFGLPPCTWPFCLSALTFLLLTTNNPAIYKLPLSKVTYPEANRIYYLSQERNRRASIITKYQAYDVS</sequence>
<keyword id="KW-0002">3D-structure</keyword>
<keyword id="KW-0025">Alternative splicing</keyword>
<keyword id="KW-1003">Cell membrane</keyword>
<keyword id="KW-0325">Glycoprotein</keyword>
<keyword id="KW-0472">Membrane</keyword>
<keyword id="KW-0597">Phosphoprotein</keyword>
<keyword id="KW-1267">Proteomics identification</keyword>
<keyword id="KW-1185">Reference proteome</keyword>
<keyword id="KW-0812">Transmembrane</keyword>
<keyword id="KW-1133">Transmembrane helix</keyword>
<keyword id="KW-0813">Transport</keyword>
<accession>Q15849</accession>
<accession>A8K8Q7</accession>
<accession>Q2TBD6</accession>
<accession>Q96PH5</accession>
<name>UT2_HUMAN</name>
<proteinExistence type="evidence at protein level"/>
<comment type="function">
    <molecule>Isoform 1</molecule>
    <text evidence="4 7">Mediates the transport of urea driven by a concentration gradient across the cell membrane of the renal inner medullary collecting duct which is critical to the urinary concentrating mechanism.</text>
</comment>
<comment type="function">
    <molecule>Isoform 2</molecule>
    <text evidence="8 9">Mediates the transport of urea driven by a concentration gradient across the cell membrane of the kidney inner medullary collecting duct which is critical to the urinary concentrating mechanism.</text>
</comment>
<comment type="catalytic activity">
    <molecule>Isoform 1</molecule>
    <reaction evidence="4 7">
        <text>urea(in) = urea(out)</text>
        <dbReference type="Rhea" id="RHEA:32799"/>
        <dbReference type="ChEBI" id="CHEBI:16199"/>
    </reaction>
</comment>
<comment type="catalytic activity">
    <molecule>Isoform 2</molecule>
    <reaction evidence="8 9">
        <text>urea(in) = urea(out)</text>
        <dbReference type="Rhea" id="RHEA:32799"/>
        <dbReference type="ChEBI" id="CHEBI:16199"/>
    </reaction>
</comment>
<comment type="activity regulation">
    <molecule>Isoform 2</molecule>
    <text evidence="8 9">Inhibited by phloretin.</text>
</comment>
<comment type="subunit">
    <molecule>Isoform 1</molecule>
    <text evidence="7">Interacts with SNAPIN which enhances its urea transport activity.</text>
</comment>
<comment type="interaction">
    <interactant intactId="EBI-1573290">
        <id>Q15849</id>
    </interactant>
    <interactant intactId="EBI-12003442">
        <id>Q8WVX3-2</id>
        <label>C4orf3</label>
    </interactant>
    <organismsDiffer>false</organismsDiffer>
    <experiments>3</experiments>
</comment>
<comment type="interaction">
    <interactant intactId="EBI-1573290">
        <id>Q15849</id>
    </interactant>
    <interactant intactId="EBI-2807956">
        <id>Q96FZ5</id>
        <label>CMTM7</label>
    </interactant>
    <organismsDiffer>false</organismsDiffer>
    <experiments>3</experiments>
</comment>
<comment type="interaction">
    <interactant intactId="EBI-1573290">
        <id>Q15849</id>
    </interactant>
    <interactant intactId="EBI-2339219">
        <id>Q08426</id>
        <label>EHHADH</label>
    </interactant>
    <organismsDiffer>false</organismsDiffer>
    <experiments>3</experiments>
</comment>
<comment type="interaction">
    <interactant intactId="EBI-1573290">
        <id>Q15849</id>
    </interactant>
    <interactant intactId="EBI-8070286">
        <id>O43561-2</id>
        <label>LAT</label>
    </interactant>
    <organismsDiffer>false</organismsDiffer>
    <experiments>3</experiments>
</comment>
<comment type="interaction">
    <interactant intactId="EBI-1573290">
        <id>Q15849</id>
    </interactant>
    <interactant intactId="EBI-2830349">
        <id>Q7Z4F1</id>
        <label>LRP10</label>
    </interactant>
    <organismsDiffer>false</organismsDiffer>
    <experiments>3</experiments>
</comment>
<comment type="interaction">
    <interactant intactId="EBI-1573290">
        <id>Q15849</id>
    </interactant>
    <interactant intactId="EBI-692836">
        <id>P26678</id>
        <label>PLN</label>
    </interactant>
    <organismsDiffer>false</organismsDiffer>
    <experiments>3</experiments>
</comment>
<comment type="interaction">
    <interactant intactId="EBI-1573290">
        <id>Q15849</id>
    </interactant>
    <interactant intactId="EBI-608347">
        <id>Q04941</id>
        <label>PLP2</label>
    </interactant>
    <organismsDiffer>false</organismsDiffer>
    <experiments>3</experiments>
</comment>
<comment type="interaction">
    <interactant intactId="EBI-1573290">
        <id>Q15849</id>
    </interactant>
    <interactant intactId="EBI-8652744">
        <id>Q96IW7</id>
        <label>SEC22A</label>
    </interactant>
    <organismsDiffer>false</organismsDiffer>
    <experiments>3</experiments>
</comment>
<comment type="interaction">
    <interactant intactId="EBI-1573290">
        <id>Q15849</id>
    </interactant>
    <interactant intactId="EBI-12111910">
        <id>Q5BJF2</id>
        <label>TMEM97</label>
    </interactant>
    <organismsDiffer>false</organismsDiffer>
    <experiments>4</experiments>
</comment>
<comment type="interaction">
    <interactant intactId="EBI-1573290">
        <id>Q15849</id>
    </interactant>
    <interactant intactId="EBI-359977">
        <id>P01375</id>
        <label>TNF</label>
    </interactant>
    <organismsDiffer>false</organismsDiffer>
    <experiments>3</experiments>
</comment>
<comment type="interaction">
    <interactant intactId="EBI-1573290">
        <id>Q15849</id>
    </interactant>
    <interactant intactId="EBI-11988865">
        <id>A5PKU2</id>
        <label>TUSC5</label>
    </interactant>
    <organismsDiffer>false</organismsDiffer>
    <experiments>3</experiments>
</comment>
<comment type="interaction">
    <interactant intactId="EBI-1573290">
        <id>Q15849</id>
    </interactant>
    <interactant intactId="EBI-10191195">
        <id>O95183</id>
        <label>VAMP5</label>
    </interactant>
    <organismsDiffer>false</organismsDiffer>
    <experiments>3</experiments>
</comment>
<comment type="interaction">
    <interactant intactId="EBI-1633392">
        <id>Q15849-1</id>
    </interactant>
    <interactant intactId="EBI-296723">
        <id>O95295</id>
        <label>SNAPIN</label>
    </interactant>
    <organismsDiffer>false</organismsDiffer>
    <experiments>5</experiments>
</comment>
<comment type="subcellular location">
    <molecule>Isoform 1</molecule>
    <subcellularLocation>
        <location evidence="7">Apical cell membrane</location>
        <topology evidence="2">Multi-pass membrane protein</topology>
    </subcellularLocation>
    <subcellularLocation>
        <location evidence="7">Cell membrane</location>
        <topology evidence="2">Multi-pass membrane protein</topology>
    </subcellularLocation>
</comment>
<comment type="alternative products">
    <event type="alternative splicing"/>
    <isoform>
        <id>Q15849-1</id>
        <name>1</name>
        <name>UT-A1</name>
        <sequence type="displayed"/>
    </isoform>
    <isoform>
        <id>Q15849-2</id>
        <name>2</name>
        <name>UT-A2</name>
        <sequence type="described" ref="VSP_031171"/>
    </isoform>
</comment>
<comment type="tissue specificity">
    <molecule>Isoform 1</molecule>
    <text evidence="4">Epressed in the inner medulla of the kidney (at protein level).</text>
</comment>
<comment type="tissue specificity">
    <molecule>Isoform 2</molecule>
    <text evidence="8">Expressed in the kidney.</text>
</comment>
<comment type="similarity">
    <text evidence="11">Belongs to the urea transporter family.</text>
</comment>
<evidence type="ECO:0000250" key="1">
    <source>
        <dbReference type="UniProtKB" id="Q62668"/>
    </source>
</evidence>
<evidence type="ECO:0000255" key="2"/>
<evidence type="ECO:0000256" key="3">
    <source>
        <dbReference type="SAM" id="MobiDB-lite"/>
    </source>
</evidence>
<evidence type="ECO:0000269" key="4">
    <source>
    </source>
</evidence>
<evidence type="ECO:0000269" key="5">
    <source>
    </source>
</evidence>
<evidence type="ECO:0000269" key="6">
    <source>
    </source>
</evidence>
<evidence type="ECO:0000269" key="7">
    <source>
    </source>
</evidence>
<evidence type="ECO:0000269" key="8">
    <source>
    </source>
</evidence>
<evidence type="ECO:0000269" key="9">
    <source>
    </source>
</evidence>
<evidence type="ECO:0000303" key="10">
    <source>
    </source>
</evidence>
<evidence type="ECO:0000305" key="11"/>
<evidence type="ECO:0007829" key="12">
    <source>
        <dbReference type="PDB" id="8BLO"/>
    </source>
</evidence>
<evidence type="ECO:0007829" key="13">
    <source>
        <dbReference type="PDB" id="8XD9"/>
    </source>
</evidence>
<evidence type="ECO:0007829" key="14">
    <source>
        <dbReference type="PDB" id="8XDA"/>
    </source>
</evidence>
<evidence type="ECO:0007829" key="15">
    <source>
        <dbReference type="PDB" id="8XDE"/>
    </source>
</evidence>
<reference key="1">
    <citation type="journal article" date="1996" name="FEBS Lett.">
        <title>Molecular characterization of a new urea transporter in the human kidney.</title>
        <authorList>
            <person name="Olives B."/>
            <person name="Sonia M."/>
            <person name="Mattei M.-G."/>
            <person name="Matassi G."/>
            <person name="Rousselet G."/>
            <person name="Ripoche P."/>
            <person name="Cartron J.-P."/>
            <person name="Bailly P."/>
        </authorList>
    </citation>
    <scope>NUCLEOTIDE SEQUENCE [MRNA] (ISOFORM 2)</scope>
    <scope>FUNCTION (ISOFORM 2)</scope>
    <scope>TRANSPORTER ACTIVITY (ISOFORM 2)</scope>
    <scope>ACTIVITY REGULATION (ISOFORM 2)</scope>
    <scope>TISSUE SPECIFICITY (ISOFORM 2)</scope>
    <source>
        <tissue>Kidney</tissue>
    </source>
</reference>
<reference key="2">
    <citation type="journal article" date="2001" name="Am. J. Physiol.">
        <title>Cloning and characterization of the human urea transporter UT-A1 and mapping of the human Slc14a2 gene.</title>
        <authorList>
            <person name="Bagnasco S.M."/>
            <person name="Peng T."/>
            <person name="Janech M.G."/>
            <person name="Karakashian A."/>
            <person name="Sands J.M."/>
        </authorList>
    </citation>
    <scope>NUCLEOTIDE SEQUENCE [MRNA] (ISOFORM 1)</scope>
    <scope>FUNCTION (ISOFORM 1)</scope>
    <scope>TRANSPORTER ACTIVITY (ISOFORM 1)</scope>
    <scope>TISSUE SPECIFICITY (ISOFORM 1)</scope>
    <scope>VARIANTS VAL-132 AND GLN-510</scope>
    <source>
        <tissue>Kidney</tissue>
    </source>
</reference>
<reference key="3">
    <citation type="journal article" date="2004" name="Nat. Genet.">
        <title>Complete sequencing and characterization of 21,243 full-length human cDNAs.</title>
        <authorList>
            <person name="Ota T."/>
            <person name="Suzuki Y."/>
            <person name="Nishikawa T."/>
            <person name="Otsuki T."/>
            <person name="Sugiyama T."/>
            <person name="Irie R."/>
            <person name="Wakamatsu A."/>
            <person name="Hayashi K."/>
            <person name="Sato H."/>
            <person name="Nagai K."/>
            <person name="Kimura K."/>
            <person name="Makita H."/>
            <person name="Sekine M."/>
            <person name="Obayashi M."/>
            <person name="Nishi T."/>
            <person name="Shibahara T."/>
            <person name="Tanaka T."/>
            <person name="Ishii S."/>
            <person name="Yamamoto J."/>
            <person name="Saito K."/>
            <person name="Kawai Y."/>
            <person name="Isono Y."/>
            <person name="Nakamura Y."/>
            <person name="Nagahari K."/>
            <person name="Murakami K."/>
            <person name="Yasuda T."/>
            <person name="Iwayanagi T."/>
            <person name="Wagatsuma M."/>
            <person name="Shiratori A."/>
            <person name="Sudo H."/>
            <person name="Hosoiri T."/>
            <person name="Kaku Y."/>
            <person name="Kodaira H."/>
            <person name="Kondo H."/>
            <person name="Sugawara M."/>
            <person name="Takahashi M."/>
            <person name="Kanda K."/>
            <person name="Yokoi T."/>
            <person name="Furuya T."/>
            <person name="Kikkawa E."/>
            <person name="Omura Y."/>
            <person name="Abe K."/>
            <person name="Kamihara K."/>
            <person name="Katsuta N."/>
            <person name="Sato K."/>
            <person name="Tanikawa M."/>
            <person name="Yamazaki M."/>
            <person name="Ninomiya K."/>
            <person name="Ishibashi T."/>
            <person name="Yamashita H."/>
            <person name="Murakawa K."/>
            <person name="Fujimori K."/>
            <person name="Tanai H."/>
            <person name="Kimata M."/>
            <person name="Watanabe M."/>
            <person name="Hiraoka S."/>
            <person name="Chiba Y."/>
            <person name="Ishida S."/>
            <person name="Ono Y."/>
            <person name="Takiguchi S."/>
            <person name="Watanabe S."/>
            <person name="Yosida M."/>
            <person name="Hotuta T."/>
            <person name="Kusano J."/>
            <person name="Kanehori K."/>
            <person name="Takahashi-Fujii A."/>
            <person name="Hara H."/>
            <person name="Tanase T.-O."/>
            <person name="Nomura Y."/>
            <person name="Togiya S."/>
            <person name="Komai F."/>
            <person name="Hara R."/>
            <person name="Takeuchi K."/>
            <person name="Arita M."/>
            <person name="Imose N."/>
            <person name="Musashino K."/>
            <person name="Yuuki H."/>
            <person name="Oshima A."/>
            <person name="Sasaki N."/>
            <person name="Aotsuka S."/>
            <person name="Yoshikawa Y."/>
            <person name="Matsunawa H."/>
            <person name="Ichihara T."/>
            <person name="Shiohata N."/>
            <person name="Sano S."/>
            <person name="Moriya S."/>
            <person name="Momiyama H."/>
            <person name="Satoh N."/>
            <person name="Takami S."/>
            <person name="Terashima Y."/>
            <person name="Suzuki O."/>
            <person name="Nakagawa S."/>
            <person name="Senoh A."/>
            <person name="Mizoguchi H."/>
            <person name="Goto Y."/>
            <person name="Shimizu F."/>
            <person name="Wakebe H."/>
            <person name="Hishigaki H."/>
            <person name="Watanabe T."/>
            <person name="Sugiyama A."/>
            <person name="Takemoto M."/>
            <person name="Kawakami B."/>
            <person name="Yamazaki M."/>
            <person name="Watanabe K."/>
            <person name="Kumagai A."/>
            <person name="Itakura S."/>
            <person name="Fukuzumi Y."/>
            <person name="Fujimori Y."/>
            <person name="Komiyama M."/>
            <person name="Tashiro H."/>
            <person name="Tanigami A."/>
            <person name="Fujiwara T."/>
            <person name="Ono T."/>
            <person name="Yamada K."/>
            <person name="Fujii Y."/>
            <person name="Ozaki K."/>
            <person name="Hirao M."/>
            <person name="Ohmori Y."/>
            <person name="Kawabata A."/>
            <person name="Hikiji T."/>
            <person name="Kobatake N."/>
            <person name="Inagaki H."/>
            <person name="Ikema Y."/>
            <person name="Okamoto S."/>
            <person name="Okitani R."/>
            <person name="Kawakami T."/>
            <person name="Noguchi S."/>
            <person name="Itoh T."/>
            <person name="Shigeta K."/>
            <person name="Senba T."/>
            <person name="Matsumura K."/>
            <person name="Nakajima Y."/>
            <person name="Mizuno T."/>
            <person name="Morinaga M."/>
            <person name="Sasaki M."/>
            <person name="Togashi T."/>
            <person name="Oyama M."/>
            <person name="Hata H."/>
            <person name="Watanabe M."/>
            <person name="Komatsu T."/>
            <person name="Mizushima-Sugano J."/>
            <person name="Satoh T."/>
            <person name="Shirai Y."/>
            <person name="Takahashi Y."/>
            <person name="Nakagawa K."/>
            <person name="Okumura K."/>
            <person name="Nagase T."/>
            <person name="Nomura N."/>
            <person name="Kikuchi H."/>
            <person name="Masuho Y."/>
            <person name="Yamashita R."/>
            <person name="Nakai K."/>
            <person name="Yada T."/>
            <person name="Nakamura Y."/>
            <person name="Ohara O."/>
            <person name="Isogai T."/>
            <person name="Sugano S."/>
        </authorList>
    </citation>
    <scope>NUCLEOTIDE SEQUENCE [LARGE SCALE MRNA] (ISOFORM 1)</scope>
    <scope>VARIANTS VAL-132 AND GLN-510</scope>
    <source>
        <tissue>Testis</tissue>
    </source>
</reference>
<reference key="4">
    <citation type="journal article" date="2005" name="Nature">
        <title>DNA sequence and analysis of human chromosome 18.</title>
        <authorList>
            <person name="Nusbaum C."/>
            <person name="Zody M.C."/>
            <person name="Borowsky M.L."/>
            <person name="Kamal M."/>
            <person name="Kodira C.D."/>
            <person name="Taylor T.D."/>
            <person name="Whittaker C.A."/>
            <person name="Chang J.L."/>
            <person name="Cuomo C.A."/>
            <person name="Dewar K."/>
            <person name="FitzGerald M.G."/>
            <person name="Yang X."/>
            <person name="Abouelleil A."/>
            <person name="Allen N.R."/>
            <person name="Anderson S."/>
            <person name="Bloom T."/>
            <person name="Bugalter B."/>
            <person name="Butler J."/>
            <person name="Cook A."/>
            <person name="DeCaprio D."/>
            <person name="Engels R."/>
            <person name="Garber M."/>
            <person name="Gnirke A."/>
            <person name="Hafez N."/>
            <person name="Hall J.L."/>
            <person name="Norman C.H."/>
            <person name="Itoh T."/>
            <person name="Jaffe D.B."/>
            <person name="Kuroki Y."/>
            <person name="Lehoczky J."/>
            <person name="Lui A."/>
            <person name="Macdonald P."/>
            <person name="Mauceli E."/>
            <person name="Mikkelsen T.S."/>
            <person name="Naylor J.W."/>
            <person name="Nicol R."/>
            <person name="Nguyen C."/>
            <person name="Noguchi H."/>
            <person name="O'Leary S.B."/>
            <person name="Piqani B."/>
            <person name="Smith C.L."/>
            <person name="Talamas J.A."/>
            <person name="Topham K."/>
            <person name="Totoki Y."/>
            <person name="Toyoda A."/>
            <person name="Wain H.M."/>
            <person name="Young S.K."/>
            <person name="Zeng Q."/>
            <person name="Zimmer A.R."/>
            <person name="Fujiyama A."/>
            <person name="Hattori M."/>
            <person name="Birren B.W."/>
            <person name="Sakaki Y."/>
            <person name="Lander E.S."/>
        </authorList>
    </citation>
    <scope>NUCLEOTIDE SEQUENCE [LARGE SCALE GENOMIC DNA]</scope>
</reference>
<reference key="5">
    <citation type="journal article" date="2004" name="Genome Res.">
        <title>The status, quality, and expansion of the NIH full-length cDNA project: the Mammalian Gene Collection (MGC).</title>
        <authorList>
            <consortium name="The MGC Project Team"/>
        </authorList>
    </citation>
    <scope>NUCLEOTIDE SEQUENCE [LARGE SCALE MRNA] (ISOFORM 1)</scope>
    <scope>VARIANTS VAL-132; GLN-510 AND THR-880</scope>
</reference>
<reference key="6">
    <citation type="journal article" date="1996" name="Am. J. Physiol.">
        <title>Functional differentiation of the human red blood cell and kidney urea transporters.</title>
        <authorList>
            <person name="Martial S."/>
            <person name="Olives B."/>
            <person name="Abrami L."/>
            <person name="Couriaud C."/>
            <person name="Bailly P."/>
            <person name="You G."/>
            <person name="Hediger M.A."/>
            <person name="Cartron J.P."/>
            <person name="Ripoche P."/>
            <person name="Rousselet G."/>
        </authorList>
    </citation>
    <scope>FUNCTION (ISOFORM 2)</scope>
    <scope>TRANSPORTER ACTIVITY (ISOFORM 2)</scope>
    <scope>ACTIVITY REGULATION (ISOFORM 2)</scope>
</reference>
<reference key="7">
    <citation type="journal article" date="2007" name="J. Biol. Chem.">
        <title>The UT-A1 urea transporter interacts with snapin, a SNARE-associated protein.</title>
        <authorList>
            <person name="Mistry A.C."/>
            <person name="Mallick R."/>
            <person name="Froehlich O."/>
            <person name="Klein J.D."/>
            <person name="Rehm A."/>
            <person name="Chen G."/>
            <person name="Sands J.M."/>
        </authorList>
    </citation>
    <scope>FUNCTION (ISOFORM 1)</scope>
    <scope>TRANSPORTER ACTIVITY (ISOFORM 1)</scope>
    <scope>INTERACTION WITH SNAPIN (ISOFORM 1)</scope>
    <scope>SUBCELLULAR LOCATION (ISOFORM 1)</scope>
</reference>